<keyword id="KW-0028">Amino-acid biosynthesis</keyword>
<keyword id="KW-0067">ATP-binding</keyword>
<keyword id="KW-0963">Cytoplasm</keyword>
<keyword id="KW-0328">Glycosyltransferase</keyword>
<keyword id="KW-0368">Histidine biosynthesis</keyword>
<keyword id="KW-0460">Magnesium</keyword>
<keyword id="KW-0479">Metal-binding</keyword>
<keyword id="KW-0547">Nucleotide-binding</keyword>
<keyword id="KW-0808">Transferase</keyword>
<sequence length="283" mass="30391">MLRVAVPNKGSLSESAAEILSEAGYRRRTDSRDLTVLDPSNQVEFFFLRPKDIAIYVGSGELDLGITGRDLARDSGAPVAERLSLGFGRSTFRYAAPAGKDWTVEDLAGLRIATSYPNLVRDDLSARGIEASVIRLDGAVEISIQLGVADAIADVVGSGRTLRQHNLVAFGDTLCDSEGVLIERAGSPDDDSARNQLVERVRGIVFAQQNLMLDYDCPKTILDDALKITPGLESPTLSPLADENWVAVRAMVPIKGHNGVMDELADLGAKAILASNIRSCRAL</sequence>
<name>HIS1_RHOJR</name>
<evidence type="ECO:0000255" key="1">
    <source>
        <dbReference type="HAMAP-Rule" id="MF_00079"/>
    </source>
</evidence>
<protein>
    <recommendedName>
        <fullName evidence="1">ATP phosphoribosyltransferase</fullName>
        <shortName evidence="1">ATP-PRT</shortName>
        <shortName evidence="1">ATP-PRTase</shortName>
        <ecNumber evidence="1">2.4.2.17</ecNumber>
    </recommendedName>
</protein>
<proteinExistence type="inferred from homology"/>
<dbReference type="EC" id="2.4.2.17" evidence="1"/>
<dbReference type="EMBL" id="CP000431">
    <property type="protein sequence ID" value="ABG92687.1"/>
    <property type="molecule type" value="Genomic_DNA"/>
</dbReference>
<dbReference type="RefSeq" id="WP_011594080.1">
    <property type="nucleotide sequence ID" value="NC_008268.1"/>
</dbReference>
<dbReference type="SMR" id="Q0SIE9"/>
<dbReference type="KEGG" id="rha:RHA1_ro00854"/>
<dbReference type="PATRIC" id="fig|101510.16.peg.873"/>
<dbReference type="eggNOG" id="COG0040">
    <property type="taxonomic scope" value="Bacteria"/>
</dbReference>
<dbReference type="HOGENOM" id="CLU_038115_1_1_11"/>
<dbReference type="OrthoDB" id="9801867at2"/>
<dbReference type="UniPathway" id="UPA00031">
    <property type="reaction ID" value="UER00006"/>
</dbReference>
<dbReference type="Proteomes" id="UP000008710">
    <property type="component" value="Chromosome"/>
</dbReference>
<dbReference type="GO" id="GO:0005737">
    <property type="term" value="C:cytoplasm"/>
    <property type="evidence" value="ECO:0007669"/>
    <property type="project" value="UniProtKB-SubCell"/>
</dbReference>
<dbReference type="GO" id="GO:0005524">
    <property type="term" value="F:ATP binding"/>
    <property type="evidence" value="ECO:0007669"/>
    <property type="project" value="UniProtKB-KW"/>
</dbReference>
<dbReference type="GO" id="GO:0003879">
    <property type="term" value="F:ATP phosphoribosyltransferase activity"/>
    <property type="evidence" value="ECO:0007669"/>
    <property type="project" value="UniProtKB-UniRule"/>
</dbReference>
<dbReference type="GO" id="GO:0000287">
    <property type="term" value="F:magnesium ion binding"/>
    <property type="evidence" value="ECO:0007669"/>
    <property type="project" value="UniProtKB-UniRule"/>
</dbReference>
<dbReference type="GO" id="GO:0000105">
    <property type="term" value="P:L-histidine biosynthetic process"/>
    <property type="evidence" value="ECO:0007669"/>
    <property type="project" value="UniProtKB-UniRule"/>
</dbReference>
<dbReference type="CDD" id="cd13591">
    <property type="entry name" value="PBP2_HisGL1"/>
    <property type="match status" value="1"/>
</dbReference>
<dbReference type="FunFam" id="3.30.70.120:FF:000003">
    <property type="entry name" value="ATP phosphoribosyltransferase"/>
    <property type="match status" value="1"/>
</dbReference>
<dbReference type="FunFam" id="3.40.190.10:FF:000136">
    <property type="entry name" value="ATP phosphoribosyltransferase"/>
    <property type="match status" value="1"/>
</dbReference>
<dbReference type="Gene3D" id="3.30.70.120">
    <property type="match status" value="1"/>
</dbReference>
<dbReference type="Gene3D" id="3.40.190.10">
    <property type="entry name" value="Periplasmic binding protein-like II"/>
    <property type="match status" value="2"/>
</dbReference>
<dbReference type="HAMAP" id="MF_00079">
    <property type="entry name" value="HisG_Long"/>
    <property type="match status" value="1"/>
</dbReference>
<dbReference type="InterPro" id="IPR020621">
    <property type="entry name" value="ATP-PRT_HisG_long"/>
</dbReference>
<dbReference type="InterPro" id="IPR013820">
    <property type="entry name" value="ATP_PRibTrfase_cat"/>
</dbReference>
<dbReference type="InterPro" id="IPR018198">
    <property type="entry name" value="ATP_PRibTrfase_CS"/>
</dbReference>
<dbReference type="InterPro" id="IPR001348">
    <property type="entry name" value="ATP_PRibTrfase_HisG"/>
</dbReference>
<dbReference type="InterPro" id="IPR013115">
    <property type="entry name" value="HisG_C"/>
</dbReference>
<dbReference type="InterPro" id="IPR011322">
    <property type="entry name" value="N-reg_PII-like_a/b"/>
</dbReference>
<dbReference type="InterPro" id="IPR015867">
    <property type="entry name" value="N-reg_PII/ATP_PRibTrfase_C"/>
</dbReference>
<dbReference type="NCBIfam" id="TIGR00070">
    <property type="entry name" value="hisG"/>
    <property type="match status" value="1"/>
</dbReference>
<dbReference type="NCBIfam" id="TIGR03455">
    <property type="entry name" value="HisG_C-term"/>
    <property type="match status" value="1"/>
</dbReference>
<dbReference type="PANTHER" id="PTHR21403:SF8">
    <property type="entry name" value="ATP PHOSPHORIBOSYLTRANSFERASE"/>
    <property type="match status" value="1"/>
</dbReference>
<dbReference type="PANTHER" id="PTHR21403">
    <property type="entry name" value="ATP PHOSPHORIBOSYLTRANSFERASE ATP-PRTASE"/>
    <property type="match status" value="1"/>
</dbReference>
<dbReference type="Pfam" id="PF01634">
    <property type="entry name" value="HisG"/>
    <property type="match status" value="1"/>
</dbReference>
<dbReference type="Pfam" id="PF08029">
    <property type="entry name" value="HisG_C"/>
    <property type="match status" value="1"/>
</dbReference>
<dbReference type="SUPFAM" id="SSF54913">
    <property type="entry name" value="GlnB-like"/>
    <property type="match status" value="1"/>
</dbReference>
<dbReference type="SUPFAM" id="SSF53850">
    <property type="entry name" value="Periplasmic binding protein-like II"/>
    <property type="match status" value="1"/>
</dbReference>
<dbReference type="PROSITE" id="PS01316">
    <property type="entry name" value="ATP_P_PHORIBOSYLTR"/>
    <property type="match status" value="1"/>
</dbReference>
<reference key="1">
    <citation type="journal article" date="2006" name="Proc. Natl. Acad. Sci. U.S.A.">
        <title>The complete genome of Rhodococcus sp. RHA1 provides insights into a catabolic powerhouse.</title>
        <authorList>
            <person name="McLeod M.P."/>
            <person name="Warren R.L."/>
            <person name="Hsiao W.W.L."/>
            <person name="Araki N."/>
            <person name="Myhre M."/>
            <person name="Fernandes C."/>
            <person name="Miyazawa D."/>
            <person name="Wong W."/>
            <person name="Lillquist A.L."/>
            <person name="Wang D."/>
            <person name="Dosanjh M."/>
            <person name="Hara H."/>
            <person name="Petrescu A."/>
            <person name="Morin R.D."/>
            <person name="Yang G."/>
            <person name="Stott J.M."/>
            <person name="Schein J.E."/>
            <person name="Shin H."/>
            <person name="Smailus D."/>
            <person name="Siddiqui A.S."/>
            <person name="Marra M.A."/>
            <person name="Jones S.J.M."/>
            <person name="Holt R."/>
            <person name="Brinkman F.S.L."/>
            <person name="Miyauchi K."/>
            <person name="Fukuda M."/>
            <person name="Davies J.E."/>
            <person name="Mohn W.W."/>
            <person name="Eltis L.D."/>
        </authorList>
    </citation>
    <scope>NUCLEOTIDE SEQUENCE [LARGE SCALE GENOMIC DNA]</scope>
    <source>
        <strain>RHA1</strain>
    </source>
</reference>
<organism>
    <name type="scientific">Rhodococcus jostii (strain RHA1)</name>
    <dbReference type="NCBI Taxonomy" id="101510"/>
    <lineage>
        <taxon>Bacteria</taxon>
        <taxon>Bacillati</taxon>
        <taxon>Actinomycetota</taxon>
        <taxon>Actinomycetes</taxon>
        <taxon>Mycobacteriales</taxon>
        <taxon>Nocardiaceae</taxon>
        <taxon>Rhodococcus</taxon>
    </lineage>
</organism>
<accession>Q0SIE9</accession>
<feature type="chain" id="PRO_1000004494" description="ATP phosphoribosyltransferase">
    <location>
        <begin position="1"/>
        <end position="283"/>
    </location>
</feature>
<gene>
    <name evidence="1" type="primary">hisG</name>
    <name type="ordered locus">RHA1_ro00854</name>
</gene>
<comment type="function">
    <text evidence="1">Catalyzes the condensation of ATP and 5-phosphoribose 1-diphosphate to form N'-(5'-phosphoribosyl)-ATP (PR-ATP). Has a crucial role in the pathway because the rate of histidine biosynthesis seems to be controlled primarily by regulation of HisG enzymatic activity.</text>
</comment>
<comment type="catalytic activity">
    <reaction evidence="1">
        <text>1-(5-phospho-beta-D-ribosyl)-ATP + diphosphate = 5-phospho-alpha-D-ribose 1-diphosphate + ATP</text>
        <dbReference type="Rhea" id="RHEA:18473"/>
        <dbReference type="ChEBI" id="CHEBI:30616"/>
        <dbReference type="ChEBI" id="CHEBI:33019"/>
        <dbReference type="ChEBI" id="CHEBI:58017"/>
        <dbReference type="ChEBI" id="CHEBI:73183"/>
        <dbReference type="EC" id="2.4.2.17"/>
    </reaction>
</comment>
<comment type="cofactor">
    <cofactor evidence="1">
        <name>Mg(2+)</name>
        <dbReference type="ChEBI" id="CHEBI:18420"/>
    </cofactor>
</comment>
<comment type="activity regulation">
    <text evidence="1">Feedback inhibited by histidine.</text>
</comment>
<comment type="pathway">
    <text evidence="1">Amino-acid biosynthesis; L-histidine biosynthesis; L-histidine from 5-phospho-alpha-D-ribose 1-diphosphate: step 1/9.</text>
</comment>
<comment type="subcellular location">
    <subcellularLocation>
        <location evidence="1">Cytoplasm</location>
    </subcellularLocation>
</comment>
<comment type="similarity">
    <text evidence="1">Belongs to the ATP phosphoribosyltransferase family. Long subfamily.</text>
</comment>